<evidence type="ECO:0000255" key="1">
    <source>
        <dbReference type="HAMAP-Rule" id="MF_00125"/>
    </source>
</evidence>
<name>HISZ_HYDCU</name>
<comment type="function">
    <text evidence="1">Required for the first step of histidine biosynthesis. May allow the feedback regulation of ATP phosphoribosyltransferase activity by histidine.</text>
</comment>
<comment type="pathway">
    <text evidence="1">Amino-acid biosynthesis; L-histidine biosynthesis; L-histidine from 5-phospho-alpha-D-ribose 1-diphosphate: step 1/9.</text>
</comment>
<comment type="subunit">
    <text evidence="1">Heteromultimer composed of HisG and HisZ subunits.</text>
</comment>
<comment type="subcellular location">
    <subcellularLocation>
        <location evidence="1">Cytoplasm</location>
    </subcellularLocation>
</comment>
<comment type="miscellaneous">
    <text>This function is generally fulfilled by the C-terminal part of HisG, which is missing in some bacteria such as this one.</text>
</comment>
<comment type="similarity">
    <text evidence="1">Belongs to the class-II aminoacyl-tRNA synthetase family. HisZ subfamily.</text>
</comment>
<protein>
    <recommendedName>
        <fullName evidence="1">ATP phosphoribosyltransferase regulatory subunit</fullName>
    </recommendedName>
</protein>
<sequence>MQQNIWFTPEGIEDLLPEEAKKLEFYRRQLLDGFELSGYDLVLPPIAEFTDSLLTGKGRHLAVDTCRFTDQESGKMMGVRADMTPQVARIATNRIKQTGIQRLCYVGEVLKTRNNKAKGSRSPIEIGAELFGHSGVESDIEVIELMVSSLHNIGLQDLTLSLGHVSVVDELMNVSGLTPTQKENLVDILLRKAVPEYTDFVAELTVTEAQKQAFELLLSLCGDIATVTEAMQGLAGLSEPMQRHLAHLQSVVDHFAGFDGLKIHMDLADLRGYQYHTGMIFSCYAAGRKMYQLARGGRYDGIGSEFGSAQLATGFSLDLRGALDLLTSPAEAEKEIVYAPNVYDADLQAEIAKLKQQKTIIKRFYEFDALEKGSRYLALQASQWILSVK</sequence>
<gene>
    <name evidence="1" type="primary">hisZ</name>
    <name type="ordered locus">Tcr_1093</name>
</gene>
<reference key="1">
    <citation type="journal article" date="2006" name="PLoS Biol.">
        <title>The genome of deep-sea vent chemolithoautotroph Thiomicrospira crunogena XCL-2.</title>
        <authorList>
            <person name="Scott K.M."/>
            <person name="Sievert S.M."/>
            <person name="Abril F.N."/>
            <person name="Ball L.A."/>
            <person name="Barrett C.J."/>
            <person name="Blake R.A."/>
            <person name="Boller A.J."/>
            <person name="Chain P.S.G."/>
            <person name="Clark J.A."/>
            <person name="Davis C.R."/>
            <person name="Detter C."/>
            <person name="Do K.F."/>
            <person name="Dobrinski K.P."/>
            <person name="Faza B.I."/>
            <person name="Fitzpatrick K.A."/>
            <person name="Freyermuth S.K."/>
            <person name="Harmer T.L."/>
            <person name="Hauser L.J."/>
            <person name="Huegler M."/>
            <person name="Kerfeld C.A."/>
            <person name="Klotz M.G."/>
            <person name="Kong W.W."/>
            <person name="Land M."/>
            <person name="Lapidus A."/>
            <person name="Larimer F.W."/>
            <person name="Longo D.L."/>
            <person name="Lucas S."/>
            <person name="Malfatti S.A."/>
            <person name="Massey S.E."/>
            <person name="Martin D.D."/>
            <person name="McCuddin Z."/>
            <person name="Meyer F."/>
            <person name="Moore J.L."/>
            <person name="Ocampo L.H. Jr."/>
            <person name="Paul J.H."/>
            <person name="Paulsen I.T."/>
            <person name="Reep D.K."/>
            <person name="Ren Q."/>
            <person name="Ross R.L."/>
            <person name="Sato P.Y."/>
            <person name="Thomas P."/>
            <person name="Tinkham L.E."/>
            <person name="Zeruth G.T."/>
        </authorList>
    </citation>
    <scope>NUCLEOTIDE SEQUENCE [LARGE SCALE GENOMIC DNA]</scope>
    <source>
        <strain>DSM 25203 / XCL-2</strain>
    </source>
</reference>
<organism>
    <name type="scientific">Hydrogenovibrio crunogenus (strain DSM 25203 / XCL-2)</name>
    <name type="common">Thiomicrospira crunogena</name>
    <dbReference type="NCBI Taxonomy" id="317025"/>
    <lineage>
        <taxon>Bacteria</taxon>
        <taxon>Pseudomonadati</taxon>
        <taxon>Pseudomonadota</taxon>
        <taxon>Gammaproteobacteria</taxon>
        <taxon>Thiotrichales</taxon>
        <taxon>Piscirickettsiaceae</taxon>
        <taxon>Hydrogenovibrio</taxon>
    </lineage>
</organism>
<dbReference type="EMBL" id="CP000109">
    <property type="protein sequence ID" value="ABB41688.1"/>
    <property type="molecule type" value="Genomic_DNA"/>
</dbReference>
<dbReference type="SMR" id="Q31GN5"/>
<dbReference type="STRING" id="317025.Tcr_1093"/>
<dbReference type="KEGG" id="tcx:Tcr_1093"/>
<dbReference type="eggNOG" id="COG3705">
    <property type="taxonomic scope" value="Bacteria"/>
</dbReference>
<dbReference type="HOGENOM" id="CLU_025113_0_1_6"/>
<dbReference type="OrthoDB" id="9769617at2"/>
<dbReference type="UniPathway" id="UPA00031">
    <property type="reaction ID" value="UER00006"/>
</dbReference>
<dbReference type="GO" id="GO:0005737">
    <property type="term" value="C:cytoplasm"/>
    <property type="evidence" value="ECO:0007669"/>
    <property type="project" value="UniProtKB-SubCell"/>
</dbReference>
<dbReference type="GO" id="GO:0004821">
    <property type="term" value="F:histidine-tRNA ligase activity"/>
    <property type="evidence" value="ECO:0007669"/>
    <property type="project" value="TreeGrafter"/>
</dbReference>
<dbReference type="GO" id="GO:0006427">
    <property type="term" value="P:histidyl-tRNA aminoacylation"/>
    <property type="evidence" value="ECO:0007669"/>
    <property type="project" value="TreeGrafter"/>
</dbReference>
<dbReference type="GO" id="GO:0000105">
    <property type="term" value="P:L-histidine biosynthetic process"/>
    <property type="evidence" value="ECO:0007669"/>
    <property type="project" value="UniProtKB-UniRule"/>
</dbReference>
<dbReference type="Gene3D" id="3.30.930.10">
    <property type="entry name" value="Bira Bifunctional Protein, Domain 2"/>
    <property type="match status" value="1"/>
</dbReference>
<dbReference type="HAMAP" id="MF_00125">
    <property type="entry name" value="HisZ"/>
    <property type="match status" value="1"/>
</dbReference>
<dbReference type="InterPro" id="IPR045864">
    <property type="entry name" value="aa-tRNA-synth_II/BPL/LPL"/>
</dbReference>
<dbReference type="InterPro" id="IPR041715">
    <property type="entry name" value="HisRS-like_core"/>
</dbReference>
<dbReference type="InterPro" id="IPR004516">
    <property type="entry name" value="HisRS/HisZ"/>
</dbReference>
<dbReference type="InterPro" id="IPR004517">
    <property type="entry name" value="HisZ"/>
</dbReference>
<dbReference type="NCBIfam" id="NF008935">
    <property type="entry name" value="PRK12292.1-1"/>
    <property type="match status" value="1"/>
</dbReference>
<dbReference type="NCBIfam" id="NF009086">
    <property type="entry name" value="PRK12421.1"/>
    <property type="match status" value="1"/>
</dbReference>
<dbReference type="PANTHER" id="PTHR43707:SF1">
    <property type="entry name" value="HISTIDINE--TRNA LIGASE, MITOCHONDRIAL-RELATED"/>
    <property type="match status" value="1"/>
</dbReference>
<dbReference type="PANTHER" id="PTHR43707">
    <property type="entry name" value="HISTIDYL-TRNA SYNTHETASE"/>
    <property type="match status" value="1"/>
</dbReference>
<dbReference type="Pfam" id="PF13393">
    <property type="entry name" value="tRNA-synt_His"/>
    <property type="match status" value="1"/>
</dbReference>
<dbReference type="PIRSF" id="PIRSF001549">
    <property type="entry name" value="His-tRNA_synth"/>
    <property type="match status" value="1"/>
</dbReference>
<dbReference type="SUPFAM" id="SSF55681">
    <property type="entry name" value="Class II aaRS and biotin synthetases"/>
    <property type="match status" value="1"/>
</dbReference>
<keyword id="KW-0028">Amino-acid biosynthesis</keyword>
<keyword id="KW-0963">Cytoplasm</keyword>
<keyword id="KW-0368">Histidine biosynthesis</keyword>
<proteinExistence type="inferred from homology"/>
<feature type="chain" id="PRO_0000242868" description="ATP phosphoribosyltransferase regulatory subunit">
    <location>
        <begin position="1"/>
        <end position="389"/>
    </location>
</feature>
<accession>Q31GN5</accession>